<organism>
    <name type="scientific">Bacillus altitudinis</name>
    <dbReference type="NCBI Taxonomy" id="293387"/>
    <lineage>
        <taxon>Bacteria</taxon>
        <taxon>Bacillati</taxon>
        <taxon>Bacillota</taxon>
        <taxon>Bacilli</taxon>
        <taxon>Bacillales</taxon>
        <taxon>Bacillaceae</taxon>
        <taxon>Bacillus</taxon>
    </lineage>
</organism>
<protein>
    <recommendedName>
        <fullName evidence="4">Glycerophosphodiester phosphodiesterase</fullName>
        <shortName evidence="4">GDPD</shortName>
        <ecNumber evidence="6">3.1.4.46</ecNumber>
    </recommendedName>
    <alternativeName>
        <fullName evidence="4">BaGDPD</fullName>
    </alternativeName>
</protein>
<evidence type="ECO:0000250" key="1">
    <source>
        <dbReference type="UniProtKB" id="Q8RB32"/>
    </source>
</evidence>
<evidence type="ECO:0000255" key="2">
    <source>
        <dbReference type="PROSITE-ProRule" id="PRU01041"/>
    </source>
</evidence>
<evidence type="ECO:0000269" key="3">
    <source>
    </source>
</evidence>
<evidence type="ECO:0000303" key="4">
    <source>
    </source>
</evidence>
<evidence type="ECO:0000305" key="5"/>
<evidence type="ECO:0000305" key="6">
    <source>
    </source>
</evidence>
<name>GDPD_BACAB</name>
<reference key="1">
    <citation type="journal article" date="2021" name="3 Biotech.">
        <title>Identification of a novel glycerophosphodiester phosphodiesterase from Bacillus altitudinis W3 and its application in degradation of diphenyl phosphate.</title>
        <authorList>
            <person name="Ren R."/>
            <person name="Zhai L."/>
            <person name="Tian Q."/>
            <person name="Meng D."/>
            <person name="Guan Z."/>
            <person name="Cai Y."/>
            <person name="Liao X."/>
        </authorList>
    </citation>
    <scope>NUCLEOTIDE SEQUENCE [GENOMIC DNA]</scope>
    <scope>FUNCTION</scope>
    <scope>CATALYTIC ACTIVITY</scope>
    <scope>COFACTOR</scope>
    <scope>ACTIVITY REGULATION</scope>
    <scope>BIOPHYSICOCHEMICAL PROPERTIES</scope>
    <scope>BIOTECHNOLOGY</scope>
    <source>
        <strain>W3</strain>
    </source>
</reference>
<proteinExistence type="evidence at protein level"/>
<keyword id="KW-0170">Cobalt</keyword>
<keyword id="KW-0319">Glycerol metabolism</keyword>
<keyword id="KW-0378">Hydrolase</keyword>
<keyword id="KW-0464">Manganese</keyword>
<keyword id="KW-0479">Metal-binding</keyword>
<keyword id="KW-0533">Nickel</keyword>
<dbReference type="EC" id="3.1.4.46" evidence="6"/>
<dbReference type="EMBL" id="MT512400">
    <property type="protein sequence ID" value="QXE97981.1"/>
    <property type="molecule type" value="Genomic_DNA"/>
</dbReference>
<dbReference type="RefSeq" id="WP_046343944.1">
    <property type="nucleotide sequence ID" value="NZ_CP011150.1"/>
</dbReference>
<dbReference type="SMR" id="A0A8F4N283"/>
<dbReference type="GO" id="GO:0046872">
    <property type="term" value="F:metal ion binding"/>
    <property type="evidence" value="ECO:0007669"/>
    <property type="project" value="UniProtKB-KW"/>
</dbReference>
<dbReference type="GO" id="GO:0008081">
    <property type="term" value="F:phosphoric diester hydrolase activity"/>
    <property type="evidence" value="ECO:0007669"/>
    <property type="project" value="InterPro"/>
</dbReference>
<dbReference type="GO" id="GO:0006071">
    <property type="term" value="P:glycerol metabolic process"/>
    <property type="evidence" value="ECO:0007669"/>
    <property type="project" value="UniProtKB-KW"/>
</dbReference>
<dbReference type="GO" id="GO:0006629">
    <property type="term" value="P:lipid metabolic process"/>
    <property type="evidence" value="ECO:0007669"/>
    <property type="project" value="InterPro"/>
</dbReference>
<dbReference type="CDD" id="cd08563">
    <property type="entry name" value="GDPD_TtGDE_like"/>
    <property type="match status" value="1"/>
</dbReference>
<dbReference type="Gene3D" id="3.20.20.190">
    <property type="entry name" value="Phosphatidylinositol (PI) phosphodiesterase"/>
    <property type="match status" value="1"/>
</dbReference>
<dbReference type="InterPro" id="IPR030395">
    <property type="entry name" value="GP_PDE_dom"/>
</dbReference>
<dbReference type="InterPro" id="IPR017946">
    <property type="entry name" value="PLC-like_Pdiesterase_TIM-brl"/>
</dbReference>
<dbReference type="PANTHER" id="PTHR46211:SF1">
    <property type="entry name" value="GLYCEROPHOSPHODIESTER PHOSPHODIESTERASE, CYTOPLASMIC"/>
    <property type="match status" value="1"/>
</dbReference>
<dbReference type="PANTHER" id="PTHR46211">
    <property type="entry name" value="GLYCEROPHOSPHORYL DIESTER PHOSPHODIESTERASE"/>
    <property type="match status" value="1"/>
</dbReference>
<dbReference type="Pfam" id="PF03009">
    <property type="entry name" value="GDPD"/>
    <property type="match status" value="1"/>
</dbReference>
<dbReference type="SUPFAM" id="SSF51695">
    <property type="entry name" value="PLC-like phosphodiesterases"/>
    <property type="match status" value="1"/>
</dbReference>
<dbReference type="PROSITE" id="PS51704">
    <property type="entry name" value="GP_PDE"/>
    <property type="match status" value="1"/>
</dbReference>
<feature type="chain" id="PRO_0000457997" description="Glycerophosphodiester phosphodiesterase">
    <location>
        <begin position="1"/>
        <end position="245"/>
    </location>
</feature>
<feature type="domain" description="GP-PDE" evidence="2">
    <location>
        <begin position="2"/>
        <end position="241"/>
    </location>
</feature>
<feature type="active site" description="Proton acceptor" evidence="1">
    <location>
        <position position="7"/>
    </location>
</feature>
<feature type="active site" description="Proton donor" evidence="1">
    <location>
        <position position="49"/>
    </location>
</feature>
<feature type="binding site" evidence="1">
    <location>
        <position position="34"/>
    </location>
    <ligand>
        <name>a divalent metal cation</name>
        <dbReference type="ChEBI" id="CHEBI:60240"/>
    </ligand>
</feature>
<feature type="binding site" evidence="1">
    <location>
        <position position="36"/>
    </location>
    <ligand>
        <name>a divalent metal cation</name>
        <dbReference type="ChEBI" id="CHEBI:60240"/>
    </ligand>
</feature>
<feature type="binding site" evidence="1">
    <location>
        <position position="110"/>
    </location>
    <ligand>
        <name>a divalent metal cation</name>
        <dbReference type="ChEBI" id="CHEBI:60240"/>
    </ligand>
</feature>
<gene>
    <name evidence="4" type="primary">bagdpd</name>
</gene>
<comment type="function">
    <text evidence="3 6">Glycerophosphodiester phosphodiesterase hydrolyzes glycerophosphodiesters into glycerol-3-phosphate (G3P) and the corresponding alcohol (Probable). Can hydrolyze the model substrate bis-(p-nitrophenyl phosphate) (bis(pNPP)) to p-nitrophenol (PubMed:33758739). Can also catalyze the degradation of diphenyl phosphate (DPHP) to phenyl phosphate (PHP) (PubMed:33758739). DPHP is an aryl phosphate ester used as a chemical additive and an industrial catalyst that can easily spread to the environment and exhibits toxicity toward organisms (PubMed:33758739).</text>
</comment>
<comment type="catalytic activity">
    <reaction evidence="6">
        <text>a sn-glycero-3-phosphodiester + H2O = an alcohol + sn-glycerol 3-phosphate + H(+)</text>
        <dbReference type="Rhea" id="RHEA:12969"/>
        <dbReference type="ChEBI" id="CHEBI:15377"/>
        <dbReference type="ChEBI" id="CHEBI:15378"/>
        <dbReference type="ChEBI" id="CHEBI:30879"/>
        <dbReference type="ChEBI" id="CHEBI:57597"/>
        <dbReference type="ChEBI" id="CHEBI:83408"/>
        <dbReference type="EC" id="3.1.4.46"/>
    </reaction>
</comment>
<comment type="cofactor">
    <cofactor evidence="3">
        <name>Ni(2+)</name>
        <dbReference type="ChEBI" id="CHEBI:49786"/>
    </cofactor>
    <cofactor evidence="3">
        <name>Co(2+)</name>
        <dbReference type="ChEBI" id="CHEBI:48828"/>
    </cofactor>
    <cofactor evidence="3">
        <name>Mn(2+)</name>
        <dbReference type="ChEBI" id="CHEBI:29035"/>
    </cofactor>
    <text evidence="3">Can also use Ca(2+) and Mg(2+), but not Fe(3+) and Zn(2+).</text>
</comment>
<comment type="activity regulation">
    <text evidence="3">Inhibited by EDTA and various organic solvents such as chloroform, toluene or benzene.</text>
</comment>
<comment type="biophysicochemical properties">
    <kinetics>
        <KM evidence="3">3.56 mM for bis(pNPP)</KM>
        <text evidence="3">kcat is 1.42 sec(-1) with bis(pNPP) as substrate.</text>
    </kinetics>
    <phDependence>
        <text evidence="3">Optimum pH is 8.5 with bis(pNPP) as substrate.</text>
    </phDependence>
    <temperatureDependence>
        <text evidence="3">Optimum temperature is 55 degrees Celsius with bis(pNPP) as substrate.</text>
    </temperatureDependence>
</comment>
<comment type="biotechnology">
    <text evidence="3">Its ability to hydrolyze DPHP into PHP suggests that it could be applied to eliminate DPHP in the environment (PubMed:33758739). Could be applied for the degradation of other toxic organophosphates to bioremediate the environment (PubMed:33758739).</text>
</comment>
<comment type="similarity">
    <text evidence="5">Belongs to the glycerophosphoryl diester phosphodiesterase family.</text>
</comment>
<accession>A0A8F4N283</accession>
<sequence length="245" mass="27915">MTKIFAHRGFKGNYPENTMIAFEHALHSGADGIELDVQLTKDGRLAVIHDEKLNRTTNMKGLVKDYTYEELKRGDASHSFYEETGAVTIPLLEEVLELVTQRSSFMINIELKNSIYRYPGIEEKVKEQIEHFQIEDRVLVSSFHHGSLALFHKLMPHIELAVLTMDVIHQPDMYLKTIPAKGYHPNIKGAGVTKEVVSALHADQQVIRPFTVNSEKQIKNMLTLGVDGIFTDFPDRAVKIREEMK</sequence>